<accession>Q63H91</accession>
<name>RS10_BACCZ</name>
<organism>
    <name type="scientific">Bacillus cereus (strain ZK / E33L)</name>
    <dbReference type="NCBI Taxonomy" id="288681"/>
    <lineage>
        <taxon>Bacteria</taxon>
        <taxon>Bacillati</taxon>
        <taxon>Bacillota</taxon>
        <taxon>Bacilli</taxon>
        <taxon>Bacillales</taxon>
        <taxon>Bacillaceae</taxon>
        <taxon>Bacillus</taxon>
        <taxon>Bacillus cereus group</taxon>
    </lineage>
</organism>
<proteinExistence type="inferred from homology"/>
<reference key="1">
    <citation type="journal article" date="2006" name="J. Bacteriol.">
        <title>Pathogenomic sequence analysis of Bacillus cereus and Bacillus thuringiensis isolates closely related to Bacillus anthracis.</title>
        <authorList>
            <person name="Han C.S."/>
            <person name="Xie G."/>
            <person name="Challacombe J.F."/>
            <person name="Altherr M.R."/>
            <person name="Bhotika S.S."/>
            <person name="Bruce D."/>
            <person name="Campbell C.S."/>
            <person name="Campbell M.L."/>
            <person name="Chen J."/>
            <person name="Chertkov O."/>
            <person name="Cleland C."/>
            <person name="Dimitrijevic M."/>
            <person name="Doggett N.A."/>
            <person name="Fawcett J.J."/>
            <person name="Glavina T."/>
            <person name="Goodwin L.A."/>
            <person name="Hill K.K."/>
            <person name="Hitchcock P."/>
            <person name="Jackson P.J."/>
            <person name="Keim P."/>
            <person name="Kewalramani A.R."/>
            <person name="Longmire J."/>
            <person name="Lucas S."/>
            <person name="Malfatti S."/>
            <person name="McMurry K."/>
            <person name="Meincke L.J."/>
            <person name="Misra M."/>
            <person name="Moseman B.L."/>
            <person name="Mundt M."/>
            <person name="Munk A.C."/>
            <person name="Okinaka R.T."/>
            <person name="Parson-Quintana B."/>
            <person name="Reilly L.P."/>
            <person name="Richardson P."/>
            <person name="Robinson D.L."/>
            <person name="Rubin E."/>
            <person name="Saunders E."/>
            <person name="Tapia R."/>
            <person name="Tesmer J.G."/>
            <person name="Thayer N."/>
            <person name="Thompson L.S."/>
            <person name="Tice H."/>
            <person name="Ticknor L.O."/>
            <person name="Wills P.L."/>
            <person name="Brettin T.S."/>
            <person name="Gilna P."/>
        </authorList>
    </citation>
    <scope>NUCLEOTIDE SEQUENCE [LARGE SCALE GENOMIC DNA]</scope>
    <source>
        <strain>ZK / E33L</strain>
    </source>
</reference>
<protein>
    <recommendedName>
        <fullName evidence="1">Small ribosomal subunit protein uS10</fullName>
    </recommendedName>
    <alternativeName>
        <fullName evidence="2">30S ribosomal protein S10</fullName>
    </alternativeName>
</protein>
<sequence>MAKEKIRIRLKAYDHRILDQSAEKIVETAKRSGATVSGPIPLPTEKTVYTILRAVHKYKDSREQFEMRTHKRLIDIVSPTPQTVDSLMRLDLPSGVDIEIKL</sequence>
<dbReference type="EMBL" id="CP000001">
    <property type="protein sequence ID" value="AAU20128.1"/>
    <property type="molecule type" value="Genomic_DNA"/>
</dbReference>
<dbReference type="RefSeq" id="WP_001040596.1">
    <property type="nucleotide sequence ID" value="NZ_CP009968.1"/>
</dbReference>
<dbReference type="SMR" id="Q63H91"/>
<dbReference type="GeneID" id="93010944"/>
<dbReference type="KEGG" id="bcz:BCE33L0103"/>
<dbReference type="PATRIC" id="fig|288681.22.peg.48"/>
<dbReference type="Proteomes" id="UP000002612">
    <property type="component" value="Chromosome"/>
</dbReference>
<dbReference type="GO" id="GO:1990904">
    <property type="term" value="C:ribonucleoprotein complex"/>
    <property type="evidence" value="ECO:0007669"/>
    <property type="project" value="UniProtKB-KW"/>
</dbReference>
<dbReference type="GO" id="GO:0005840">
    <property type="term" value="C:ribosome"/>
    <property type="evidence" value="ECO:0007669"/>
    <property type="project" value="UniProtKB-KW"/>
</dbReference>
<dbReference type="GO" id="GO:0003735">
    <property type="term" value="F:structural constituent of ribosome"/>
    <property type="evidence" value="ECO:0007669"/>
    <property type="project" value="InterPro"/>
</dbReference>
<dbReference type="GO" id="GO:0000049">
    <property type="term" value="F:tRNA binding"/>
    <property type="evidence" value="ECO:0007669"/>
    <property type="project" value="UniProtKB-UniRule"/>
</dbReference>
<dbReference type="GO" id="GO:0006412">
    <property type="term" value="P:translation"/>
    <property type="evidence" value="ECO:0007669"/>
    <property type="project" value="UniProtKB-UniRule"/>
</dbReference>
<dbReference type="FunFam" id="3.30.70.600:FF:000001">
    <property type="entry name" value="30S ribosomal protein S10"/>
    <property type="match status" value="1"/>
</dbReference>
<dbReference type="Gene3D" id="3.30.70.600">
    <property type="entry name" value="Ribosomal protein S10 domain"/>
    <property type="match status" value="1"/>
</dbReference>
<dbReference type="HAMAP" id="MF_00508">
    <property type="entry name" value="Ribosomal_uS10"/>
    <property type="match status" value="1"/>
</dbReference>
<dbReference type="InterPro" id="IPR001848">
    <property type="entry name" value="Ribosomal_uS10"/>
</dbReference>
<dbReference type="InterPro" id="IPR018268">
    <property type="entry name" value="Ribosomal_uS10_CS"/>
</dbReference>
<dbReference type="InterPro" id="IPR027486">
    <property type="entry name" value="Ribosomal_uS10_dom"/>
</dbReference>
<dbReference type="InterPro" id="IPR036838">
    <property type="entry name" value="Ribosomal_uS10_dom_sf"/>
</dbReference>
<dbReference type="NCBIfam" id="NF001861">
    <property type="entry name" value="PRK00596.1"/>
    <property type="match status" value="1"/>
</dbReference>
<dbReference type="NCBIfam" id="TIGR01049">
    <property type="entry name" value="rpsJ_bact"/>
    <property type="match status" value="1"/>
</dbReference>
<dbReference type="PANTHER" id="PTHR11700">
    <property type="entry name" value="30S RIBOSOMAL PROTEIN S10 FAMILY MEMBER"/>
    <property type="match status" value="1"/>
</dbReference>
<dbReference type="Pfam" id="PF00338">
    <property type="entry name" value="Ribosomal_S10"/>
    <property type="match status" value="1"/>
</dbReference>
<dbReference type="PRINTS" id="PR00971">
    <property type="entry name" value="RIBOSOMALS10"/>
</dbReference>
<dbReference type="SMART" id="SM01403">
    <property type="entry name" value="Ribosomal_S10"/>
    <property type="match status" value="1"/>
</dbReference>
<dbReference type="SUPFAM" id="SSF54999">
    <property type="entry name" value="Ribosomal protein S10"/>
    <property type="match status" value="1"/>
</dbReference>
<dbReference type="PROSITE" id="PS00361">
    <property type="entry name" value="RIBOSOMAL_S10"/>
    <property type="match status" value="1"/>
</dbReference>
<feature type="chain" id="PRO_0000237013" description="Small ribosomal subunit protein uS10">
    <location>
        <begin position="1"/>
        <end position="102"/>
    </location>
</feature>
<evidence type="ECO:0000255" key="1">
    <source>
        <dbReference type="HAMAP-Rule" id="MF_00508"/>
    </source>
</evidence>
<evidence type="ECO:0000305" key="2"/>
<gene>
    <name evidence="1" type="primary">rpsJ</name>
    <name type="ordered locus">BCE33L0103</name>
</gene>
<comment type="function">
    <text evidence="1">Involved in the binding of tRNA to the ribosomes.</text>
</comment>
<comment type="subunit">
    <text evidence="1">Part of the 30S ribosomal subunit.</text>
</comment>
<comment type="similarity">
    <text evidence="1">Belongs to the universal ribosomal protein uS10 family.</text>
</comment>
<keyword id="KW-0687">Ribonucleoprotein</keyword>
<keyword id="KW-0689">Ribosomal protein</keyword>